<protein>
    <recommendedName>
        <fullName>Class E vacuolar protein-sorting machinery protein hse1</fullName>
    </recommendedName>
</protein>
<keyword id="KW-0967">Endosome</keyword>
<keyword id="KW-0472">Membrane</keyword>
<keyword id="KW-0653">Protein transport</keyword>
<keyword id="KW-1185">Reference proteome</keyword>
<keyword id="KW-0728">SH3 domain</keyword>
<keyword id="KW-0813">Transport</keyword>
<evidence type="ECO:0000250" key="1"/>
<evidence type="ECO:0000255" key="2">
    <source>
        <dbReference type="PROSITE-ProRule" id="PRU00192"/>
    </source>
</evidence>
<evidence type="ECO:0000255" key="3">
    <source>
        <dbReference type="PROSITE-ProRule" id="PRU00218"/>
    </source>
</evidence>
<evidence type="ECO:0000256" key="4">
    <source>
        <dbReference type="SAM" id="MobiDB-lite"/>
    </source>
</evidence>
<evidence type="ECO:0000305" key="5"/>
<dbReference type="EMBL" id="CH476601">
    <property type="protein sequence ID" value="EAU33797.1"/>
    <property type="molecule type" value="Genomic_DNA"/>
</dbReference>
<dbReference type="RefSeq" id="XP_001215214.1">
    <property type="nucleotide sequence ID" value="XM_001215214.1"/>
</dbReference>
<dbReference type="SMR" id="Q0CJU8"/>
<dbReference type="STRING" id="341663.Q0CJU8"/>
<dbReference type="EnsemblFungi" id="EAU33797">
    <property type="protein sequence ID" value="EAU33797"/>
    <property type="gene ID" value="ATEG_06036"/>
</dbReference>
<dbReference type="GeneID" id="4321440"/>
<dbReference type="VEuPathDB" id="FungiDB:ATEG_06036"/>
<dbReference type="eggNOG" id="KOG2199">
    <property type="taxonomic scope" value="Eukaryota"/>
</dbReference>
<dbReference type="HOGENOM" id="CLU_010104_1_1_1"/>
<dbReference type="OMA" id="QVYRDWW"/>
<dbReference type="OrthoDB" id="10255964at2759"/>
<dbReference type="Proteomes" id="UP000007963">
    <property type="component" value="Unassembled WGS sequence"/>
</dbReference>
<dbReference type="GO" id="GO:0010008">
    <property type="term" value="C:endosome membrane"/>
    <property type="evidence" value="ECO:0007669"/>
    <property type="project" value="UniProtKB-SubCell"/>
</dbReference>
<dbReference type="GO" id="GO:0033565">
    <property type="term" value="C:ESCRT-0 complex"/>
    <property type="evidence" value="ECO:0007669"/>
    <property type="project" value="TreeGrafter"/>
</dbReference>
<dbReference type="GO" id="GO:0035091">
    <property type="term" value="F:phosphatidylinositol binding"/>
    <property type="evidence" value="ECO:0007669"/>
    <property type="project" value="InterPro"/>
</dbReference>
<dbReference type="GO" id="GO:0043130">
    <property type="term" value="F:ubiquitin binding"/>
    <property type="evidence" value="ECO:0007669"/>
    <property type="project" value="InterPro"/>
</dbReference>
<dbReference type="GO" id="GO:0043328">
    <property type="term" value="P:protein transport to vacuole involved in ubiquitin-dependent protein catabolic process via the multivesicular body sorting pathway"/>
    <property type="evidence" value="ECO:0007669"/>
    <property type="project" value="TreeGrafter"/>
</dbReference>
<dbReference type="CDD" id="cd21386">
    <property type="entry name" value="GAT_Hse1"/>
    <property type="match status" value="1"/>
</dbReference>
<dbReference type="CDD" id="cd11805">
    <property type="entry name" value="SH3_GRB2_like_C"/>
    <property type="match status" value="1"/>
</dbReference>
<dbReference type="CDD" id="cd16978">
    <property type="entry name" value="VHS_HSE1"/>
    <property type="match status" value="1"/>
</dbReference>
<dbReference type="FunFam" id="2.30.30.40:FF:000072">
    <property type="entry name" value="Unconventional Myosin IB"/>
    <property type="match status" value="1"/>
</dbReference>
<dbReference type="Gene3D" id="1.20.5.1940">
    <property type="match status" value="1"/>
</dbReference>
<dbReference type="Gene3D" id="1.25.40.90">
    <property type="match status" value="1"/>
</dbReference>
<dbReference type="Gene3D" id="2.30.30.40">
    <property type="entry name" value="SH3 Domains"/>
    <property type="match status" value="1"/>
</dbReference>
<dbReference type="InterPro" id="IPR008942">
    <property type="entry name" value="ENTH_VHS"/>
</dbReference>
<dbReference type="InterPro" id="IPR004152">
    <property type="entry name" value="GAT_dom"/>
</dbReference>
<dbReference type="InterPro" id="IPR036028">
    <property type="entry name" value="SH3-like_dom_sf"/>
</dbReference>
<dbReference type="InterPro" id="IPR001452">
    <property type="entry name" value="SH3_domain"/>
</dbReference>
<dbReference type="InterPro" id="IPR050670">
    <property type="entry name" value="STAM"/>
</dbReference>
<dbReference type="InterPro" id="IPR002014">
    <property type="entry name" value="VHS_dom"/>
</dbReference>
<dbReference type="PANTHER" id="PTHR45929">
    <property type="entry name" value="JAK PATHWAY SIGNAL TRANSDUCTION ADAPTOR MOLECULE"/>
    <property type="match status" value="1"/>
</dbReference>
<dbReference type="PANTHER" id="PTHR45929:SF3">
    <property type="entry name" value="JAK PATHWAY SIGNAL TRANSDUCTION ADAPTOR MOLECULE"/>
    <property type="match status" value="1"/>
</dbReference>
<dbReference type="Pfam" id="PF03127">
    <property type="entry name" value="GAT"/>
    <property type="match status" value="1"/>
</dbReference>
<dbReference type="Pfam" id="PF00018">
    <property type="entry name" value="SH3_1"/>
    <property type="match status" value="1"/>
</dbReference>
<dbReference type="Pfam" id="PF00790">
    <property type="entry name" value="VHS"/>
    <property type="match status" value="1"/>
</dbReference>
<dbReference type="PRINTS" id="PR00452">
    <property type="entry name" value="SH3DOMAIN"/>
</dbReference>
<dbReference type="PRINTS" id="PR01887">
    <property type="entry name" value="SPECTRNALPHA"/>
</dbReference>
<dbReference type="SMART" id="SM00326">
    <property type="entry name" value="SH3"/>
    <property type="match status" value="1"/>
</dbReference>
<dbReference type="SMART" id="SM00288">
    <property type="entry name" value="VHS"/>
    <property type="match status" value="1"/>
</dbReference>
<dbReference type="SUPFAM" id="SSF48464">
    <property type="entry name" value="ENTH/VHS domain"/>
    <property type="match status" value="1"/>
</dbReference>
<dbReference type="SUPFAM" id="SSF50044">
    <property type="entry name" value="SH3-domain"/>
    <property type="match status" value="1"/>
</dbReference>
<dbReference type="PROSITE" id="PS50002">
    <property type="entry name" value="SH3"/>
    <property type="match status" value="1"/>
</dbReference>
<dbReference type="PROSITE" id="PS50179">
    <property type="entry name" value="VHS"/>
    <property type="match status" value="1"/>
</dbReference>
<organism>
    <name type="scientific">Aspergillus terreus (strain NIH 2624 / FGSC A1156)</name>
    <dbReference type="NCBI Taxonomy" id="341663"/>
    <lineage>
        <taxon>Eukaryota</taxon>
        <taxon>Fungi</taxon>
        <taxon>Dikarya</taxon>
        <taxon>Ascomycota</taxon>
        <taxon>Pezizomycotina</taxon>
        <taxon>Eurotiomycetes</taxon>
        <taxon>Eurotiomycetidae</taxon>
        <taxon>Eurotiales</taxon>
        <taxon>Aspergillaceae</taxon>
        <taxon>Aspergillus</taxon>
        <taxon>Aspergillus subgen. Circumdati</taxon>
    </lineage>
</organism>
<reference key="1">
    <citation type="submission" date="2005-09" db="EMBL/GenBank/DDBJ databases">
        <title>Annotation of the Aspergillus terreus NIH2624 genome.</title>
        <authorList>
            <person name="Birren B.W."/>
            <person name="Lander E.S."/>
            <person name="Galagan J.E."/>
            <person name="Nusbaum C."/>
            <person name="Devon K."/>
            <person name="Henn M."/>
            <person name="Ma L.-J."/>
            <person name="Jaffe D.B."/>
            <person name="Butler J."/>
            <person name="Alvarez P."/>
            <person name="Gnerre S."/>
            <person name="Grabherr M."/>
            <person name="Kleber M."/>
            <person name="Mauceli E.W."/>
            <person name="Brockman W."/>
            <person name="Rounsley S."/>
            <person name="Young S.K."/>
            <person name="LaButti K."/>
            <person name="Pushparaj V."/>
            <person name="DeCaprio D."/>
            <person name="Crawford M."/>
            <person name="Koehrsen M."/>
            <person name="Engels R."/>
            <person name="Montgomery P."/>
            <person name="Pearson M."/>
            <person name="Howarth C."/>
            <person name="Larson L."/>
            <person name="Luoma S."/>
            <person name="White J."/>
            <person name="Alvarado L."/>
            <person name="Kodira C.D."/>
            <person name="Zeng Q."/>
            <person name="Oleary S."/>
            <person name="Yandava C."/>
            <person name="Denning D.W."/>
            <person name="Nierman W.C."/>
            <person name="Milne T."/>
            <person name="Madden K."/>
        </authorList>
    </citation>
    <scope>NUCLEOTIDE SEQUENCE [LARGE SCALE GENOMIC DNA]</scope>
    <source>
        <strain>NIH 2624 / FGSC A1156</strain>
    </source>
</reference>
<comment type="function">
    <text evidence="1">Component of the ESCRT-0 complex which is the sorting receptor for ubiquitinated cargo proteins at the multivesicular body (MVB).</text>
</comment>
<comment type="subunit">
    <text evidence="1">Component of the ESCRT-0 complex composed of HSE1 and VPS27.</text>
</comment>
<comment type="subcellular location">
    <subcellularLocation>
        <location evidence="1">Endosome membrane</location>
        <topology evidence="1">Peripheral membrane protein</topology>
        <orientation evidence="1">Cytoplasmic side</orientation>
    </subcellularLocation>
</comment>
<comment type="similarity">
    <text evidence="5">Belongs to the STAM family.</text>
</comment>
<proteinExistence type="inferred from homology"/>
<gene>
    <name type="primary">hse1</name>
    <name type="ORF">ATEG_06036</name>
</gene>
<feature type="chain" id="PRO_0000292489" description="Class E vacuolar protein-sorting machinery protein hse1">
    <location>
        <begin position="1"/>
        <end position="597"/>
    </location>
</feature>
<feature type="domain" description="VHS" evidence="3">
    <location>
        <begin position="16"/>
        <end position="145"/>
    </location>
</feature>
<feature type="domain" description="UIM" evidence="5">
    <location>
        <begin position="162"/>
        <end position="181"/>
    </location>
</feature>
<feature type="domain" description="SH3" evidence="2">
    <location>
        <begin position="224"/>
        <end position="283"/>
    </location>
</feature>
<feature type="region of interest" description="Disordered" evidence="4">
    <location>
        <begin position="140"/>
        <end position="164"/>
    </location>
</feature>
<feature type="region of interest" description="Disordered" evidence="4">
    <location>
        <begin position="178"/>
        <end position="218"/>
    </location>
</feature>
<feature type="region of interest" description="Disordered" evidence="4">
    <location>
        <begin position="380"/>
        <end position="597"/>
    </location>
</feature>
<feature type="compositionally biased region" description="Basic and acidic residues" evidence="4">
    <location>
        <begin position="151"/>
        <end position="163"/>
    </location>
</feature>
<feature type="compositionally biased region" description="Low complexity" evidence="4">
    <location>
        <begin position="189"/>
        <end position="218"/>
    </location>
</feature>
<feature type="compositionally biased region" description="Low complexity" evidence="4">
    <location>
        <begin position="381"/>
        <end position="391"/>
    </location>
</feature>
<feature type="compositionally biased region" description="Pro residues" evidence="4">
    <location>
        <begin position="392"/>
        <end position="410"/>
    </location>
</feature>
<feature type="compositionally biased region" description="Low complexity" evidence="4">
    <location>
        <begin position="440"/>
        <end position="450"/>
    </location>
</feature>
<feature type="compositionally biased region" description="Basic and acidic residues" evidence="4">
    <location>
        <begin position="471"/>
        <end position="481"/>
    </location>
</feature>
<feature type="compositionally biased region" description="Pro residues" evidence="4">
    <location>
        <begin position="548"/>
        <end position="560"/>
    </location>
</feature>
<sequence>MFRAQQNAFDDAVAKATDENLTSENWEYILDVCDKVAAEESGAKDAVAALIKRLAHRNANVQLYTLELGNALAQNCGPKIHRELASRSFTDALLRLANDRNTHQQVKAKILERMQEWTEMFASNPDFGIMEQAYMKLKTQNPNLQPPSKPGKREITEADRQKEEEELQMALALSIREKPSTAPHPQAESSASAAAAATTPTGAASAGQAQPAASQAVPSGTSAATVSRVRALFDFQPSEPGELQFRKGDVIAVLESVYKDWWKGSLRGQTGIFPLNYVEKLPDPTVEELQREAQMEAEVFGQIKNVEKLLTLLSTRSSEPNVQDNEEITALYHSTLAIRPKLIELIGKYSQKKDEFTQLNEKFIKARRDYEALLEASMSHPAQPQYGRPGQPQYPYPGPGAPMGYPPGGPQPDQRYFSPRPQGHMYPPTSQSPGPRNHTPPAAAPYQQAPSHPPAQPQQHTAPDAYPPQHHRPESTYDHPQELSTSVYDSPVEQRPPYPGAQIPAAIHQHFQQQQQQQQDYSPSVYSPDESKPPGTQQVPYPATPAANQPPPMHQPPPVPGAAAAPTPYPVNAPGASYQAYKPPQGGPASNPASFYQ</sequence>
<accession>Q0CJU8</accession>
<name>HSE1_ASPTN</name>